<accession>A0PM79</accession>
<comment type="function">
    <text evidence="1">One of the primary rRNA binding proteins, it binds directly to 16S rRNA central domain where it helps coordinate assembly of the platform of the 30S subunit.</text>
</comment>
<comment type="subunit">
    <text evidence="1">Part of the 30S ribosomal subunit. Contacts proteins S5 and S12.</text>
</comment>
<comment type="similarity">
    <text evidence="1">Belongs to the universal ribosomal protein uS8 family.</text>
</comment>
<sequence length="132" mass="14393">MTMTDPIADFLTRLRNANSAYHDEVSLPHSKIKANIAQILKNEGYISDFHTEDARVGKSLIVQLKYGPSRERSIAGLRRVSKPGLRVYAKSTNLPRVLGGLGVAIISTSSGLLTDRQAARQGVGGEVLAYVW</sequence>
<organism>
    <name type="scientific">Mycobacterium ulcerans (strain Agy99)</name>
    <dbReference type="NCBI Taxonomy" id="362242"/>
    <lineage>
        <taxon>Bacteria</taxon>
        <taxon>Bacillati</taxon>
        <taxon>Actinomycetota</taxon>
        <taxon>Actinomycetes</taxon>
        <taxon>Mycobacteriales</taxon>
        <taxon>Mycobacteriaceae</taxon>
        <taxon>Mycobacterium</taxon>
        <taxon>Mycobacterium ulcerans group</taxon>
    </lineage>
</organism>
<proteinExistence type="inferred from homology"/>
<gene>
    <name evidence="1" type="primary">rpsH</name>
    <name type="ordered locus">MUL_0808</name>
</gene>
<evidence type="ECO:0000255" key="1">
    <source>
        <dbReference type="HAMAP-Rule" id="MF_01302"/>
    </source>
</evidence>
<evidence type="ECO:0000305" key="2"/>
<reference key="1">
    <citation type="journal article" date="2007" name="Genome Res.">
        <title>Reductive evolution and niche adaptation inferred from the genome of Mycobacterium ulcerans, the causative agent of Buruli ulcer.</title>
        <authorList>
            <person name="Stinear T.P."/>
            <person name="Seemann T."/>
            <person name="Pidot S."/>
            <person name="Frigui W."/>
            <person name="Reysset G."/>
            <person name="Garnier T."/>
            <person name="Meurice G."/>
            <person name="Simon D."/>
            <person name="Bouchier C."/>
            <person name="Ma L."/>
            <person name="Tichit M."/>
            <person name="Porter J.L."/>
            <person name="Ryan J."/>
            <person name="Johnson P.D.R."/>
            <person name="Davies J.K."/>
            <person name="Jenkin G.A."/>
            <person name="Small P.L.C."/>
            <person name="Jones L.M."/>
            <person name="Tekaia F."/>
            <person name="Laval F."/>
            <person name="Daffe M."/>
            <person name="Parkhill J."/>
            <person name="Cole S.T."/>
        </authorList>
    </citation>
    <scope>NUCLEOTIDE SEQUENCE [LARGE SCALE GENOMIC DNA]</scope>
    <source>
        <strain>Agy99</strain>
    </source>
</reference>
<keyword id="KW-0687">Ribonucleoprotein</keyword>
<keyword id="KW-0689">Ribosomal protein</keyword>
<keyword id="KW-0694">RNA-binding</keyword>
<keyword id="KW-0699">rRNA-binding</keyword>
<feature type="chain" id="PRO_0000290883" description="Small ribosomal subunit protein uS8">
    <location>
        <begin position="1"/>
        <end position="132"/>
    </location>
</feature>
<name>RS8_MYCUA</name>
<protein>
    <recommendedName>
        <fullName evidence="1">Small ribosomal subunit protein uS8</fullName>
    </recommendedName>
    <alternativeName>
        <fullName evidence="2">30S ribosomal protein S8</fullName>
    </alternativeName>
</protein>
<dbReference type="EMBL" id="CP000325">
    <property type="protein sequence ID" value="ABL03448.1"/>
    <property type="molecule type" value="Genomic_DNA"/>
</dbReference>
<dbReference type="RefSeq" id="WP_011739073.1">
    <property type="nucleotide sequence ID" value="NC_008611.1"/>
</dbReference>
<dbReference type="SMR" id="A0PM79"/>
<dbReference type="GeneID" id="93438583"/>
<dbReference type="KEGG" id="mul:MUL_0808"/>
<dbReference type="eggNOG" id="COG0096">
    <property type="taxonomic scope" value="Bacteria"/>
</dbReference>
<dbReference type="HOGENOM" id="CLU_098428_0_1_11"/>
<dbReference type="Proteomes" id="UP000000765">
    <property type="component" value="Chromosome"/>
</dbReference>
<dbReference type="GO" id="GO:1990904">
    <property type="term" value="C:ribonucleoprotein complex"/>
    <property type="evidence" value="ECO:0007669"/>
    <property type="project" value="UniProtKB-KW"/>
</dbReference>
<dbReference type="GO" id="GO:0005840">
    <property type="term" value="C:ribosome"/>
    <property type="evidence" value="ECO:0007669"/>
    <property type="project" value="UniProtKB-KW"/>
</dbReference>
<dbReference type="GO" id="GO:0019843">
    <property type="term" value="F:rRNA binding"/>
    <property type="evidence" value="ECO:0007669"/>
    <property type="project" value="UniProtKB-UniRule"/>
</dbReference>
<dbReference type="GO" id="GO:0003735">
    <property type="term" value="F:structural constituent of ribosome"/>
    <property type="evidence" value="ECO:0007669"/>
    <property type="project" value="InterPro"/>
</dbReference>
<dbReference type="GO" id="GO:0006412">
    <property type="term" value="P:translation"/>
    <property type="evidence" value="ECO:0007669"/>
    <property type="project" value="UniProtKB-UniRule"/>
</dbReference>
<dbReference type="FunFam" id="3.30.1370.30:FF:000002">
    <property type="entry name" value="30S ribosomal protein S8"/>
    <property type="match status" value="1"/>
</dbReference>
<dbReference type="FunFam" id="3.30.1490.10:FF:000001">
    <property type="entry name" value="30S ribosomal protein S8"/>
    <property type="match status" value="1"/>
</dbReference>
<dbReference type="Gene3D" id="3.30.1370.30">
    <property type="match status" value="1"/>
</dbReference>
<dbReference type="Gene3D" id="3.30.1490.10">
    <property type="match status" value="1"/>
</dbReference>
<dbReference type="HAMAP" id="MF_01302_B">
    <property type="entry name" value="Ribosomal_uS8_B"/>
    <property type="match status" value="1"/>
</dbReference>
<dbReference type="InterPro" id="IPR000630">
    <property type="entry name" value="Ribosomal_uS8"/>
</dbReference>
<dbReference type="InterPro" id="IPR047863">
    <property type="entry name" value="Ribosomal_uS8_CS"/>
</dbReference>
<dbReference type="InterPro" id="IPR035987">
    <property type="entry name" value="Ribosomal_uS8_sf"/>
</dbReference>
<dbReference type="NCBIfam" id="NF001109">
    <property type="entry name" value="PRK00136.1"/>
    <property type="match status" value="1"/>
</dbReference>
<dbReference type="PANTHER" id="PTHR11758">
    <property type="entry name" value="40S RIBOSOMAL PROTEIN S15A"/>
    <property type="match status" value="1"/>
</dbReference>
<dbReference type="Pfam" id="PF00410">
    <property type="entry name" value="Ribosomal_S8"/>
    <property type="match status" value="1"/>
</dbReference>
<dbReference type="SUPFAM" id="SSF56047">
    <property type="entry name" value="Ribosomal protein S8"/>
    <property type="match status" value="1"/>
</dbReference>
<dbReference type="PROSITE" id="PS00053">
    <property type="entry name" value="RIBOSOMAL_S8"/>
    <property type="match status" value="1"/>
</dbReference>